<organism>
    <name type="scientific">Homo sapiens</name>
    <name type="common">Human</name>
    <dbReference type="NCBI Taxonomy" id="9606"/>
    <lineage>
        <taxon>Eukaryota</taxon>
        <taxon>Metazoa</taxon>
        <taxon>Chordata</taxon>
        <taxon>Craniata</taxon>
        <taxon>Vertebrata</taxon>
        <taxon>Euteleostomi</taxon>
        <taxon>Mammalia</taxon>
        <taxon>Eutheria</taxon>
        <taxon>Euarchontoglires</taxon>
        <taxon>Primates</taxon>
        <taxon>Haplorrhini</taxon>
        <taxon>Catarrhini</taxon>
        <taxon>Hominidae</taxon>
        <taxon>Homo</taxon>
    </lineage>
</organism>
<comment type="function">
    <text evidence="3 7 8">Essential component of the NELF complex, a complex that negatively regulates the elongation of transcription by RNA polymerase II. The NELF complex, which acts via an association with the DSIF complex and causes transcriptional pausing, is counteracted by the P-TEFb kinase complex.</text>
</comment>
<comment type="function">
    <text evidence="9">(Microbial infection) The NELF complex is involved in HIV-1 latency possibly involving recruitment of PCF11 to paused RNA polymerase II.</text>
</comment>
<comment type="subunit">
    <text evidence="3 6 10">The NELF complex is composed of NELFA, NELFB, NELFCD (isoform NELF-C or isoform NELF-D) and NELFE; NELFA and NELFCD form a stable subcomplex that binds to the N-terminus of NELFB (PubMed:11387440). In vitro, the NELFA:NELFCD subcomplex binds to ssDNA and ssRNA in a sequence- and structure-dependent manner (PubMed:27282391). Interacts with the RNA polymerase II complex when it is not phosphorylated by P-TEFb (PubMed:10199401).</text>
</comment>
<comment type="interaction">
    <interactant intactId="EBI-5461341">
        <id>Q9H3P2</id>
    </interactant>
    <interactant intactId="EBI-1245761">
        <id>Q00526</id>
        <label>CDK3</label>
    </interactant>
    <organismsDiffer>false</organismsDiffer>
    <experiments>3</experiments>
</comment>
<comment type="interaction">
    <interactant intactId="EBI-5461341">
        <id>Q9H3P2</id>
    </interactant>
    <interactant intactId="EBI-744248">
        <id>P40692</id>
        <label>MLH1</label>
    </interactant>
    <organismsDiffer>false</organismsDiffer>
    <experiments>3</experiments>
</comment>
<comment type="interaction">
    <interactant intactId="EBI-5461341">
        <id>Q9H3P2</id>
    </interactant>
    <interactant intactId="EBI-713635">
        <id>O43639</id>
        <label>NCK2</label>
    </interactant>
    <organismsDiffer>false</organismsDiffer>
    <experiments>3</experiments>
</comment>
<comment type="interaction">
    <interactant intactId="EBI-5461341">
        <id>Q9H3P2</id>
    </interactant>
    <interactant intactId="EBI-536725">
        <id>Q8IXH7</id>
        <label>NELFCD</label>
    </interactant>
    <organismsDiffer>false</organismsDiffer>
    <experiments>14</experiments>
</comment>
<comment type="interaction">
    <interactant intactId="EBI-5461341">
        <id>Q9H3P2</id>
    </interactant>
    <interactant intactId="EBI-6109710">
        <id>Q8IXH7-4</id>
        <label>NELFCD</label>
    </interactant>
    <organismsDiffer>false</organismsDiffer>
    <experiments>5</experiments>
</comment>
<comment type="interaction">
    <interactant intactId="EBI-5461341">
        <id>Q9H3P2</id>
    </interactant>
    <interactant intactId="EBI-2624570">
        <id>P35372</id>
        <label>OPRM1</label>
    </interactant>
    <organismsDiffer>false</organismsDiffer>
    <experiments>2</experiments>
</comment>
<comment type="interaction">
    <interactant intactId="EBI-5461341">
        <id>Q9H3P2</id>
    </interactant>
    <interactant intactId="EBI-714158">
        <id>Q13526</id>
        <label>PIN1</label>
    </interactant>
    <organismsDiffer>false</organismsDiffer>
    <experiments>3</experiments>
</comment>
<comment type="interaction">
    <interactant intactId="EBI-5461341">
        <id>Q9H3P2</id>
    </interactant>
    <interactant intactId="EBI-346595">
        <id>Q96B97</id>
        <label>SH3KBP1</label>
    </interactant>
    <organismsDiffer>false</organismsDiffer>
    <experiments>3</experiments>
</comment>
<comment type="interaction">
    <interactant intactId="EBI-5461341">
        <id>Q9H3P2</id>
    </interactant>
    <interactant intactId="EBI-747107">
        <id>Q8IUQ4</id>
        <label>SIAH1</label>
    </interactant>
    <organismsDiffer>false</organismsDiffer>
    <experiments>3</experiments>
</comment>
<comment type="interaction">
    <interactant intactId="EBI-5461341">
        <id>Q9H3P2</id>
    </interactant>
    <interactant intactId="EBI-358489">
        <id>Q96GM5</id>
        <label>SMARCD1</label>
    </interactant>
    <organismsDiffer>false</organismsDiffer>
    <experiments>3</experiments>
</comment>
<comment type="subcellular location">
    <subcellularLocation>
        <location evidence="5">Nucleus</location>
    </subcellularLocation>
</comment>
<comment type="alternative products">
    <event type="alternative splicing"/>
    <isoform>
        <id>Q9H3P2-1</id>
        <name>1</name>
        <sequence type="displayed"/>
    </isoform>
    <isoform>
        <id>Q9H3P2-7</id>
        <name>2</name>
        <sequence type="described" ref="VSP_035589"/>
    </isoform>
</comment>
<comment type="tissue specificity">
    <text evidence="4 5 8">Ubiquitous. Expressed in heart, brain, placenta, liver, skeletal muscle, kidney and pancreas. Expressed at lower level in adult lung. Expressed in fetal brain, lung, liver and kidney.</text>
</comment>
<comment type="domain">
    <text evidence="8">The HDAg-like domain is essential for transcriptional repression, and mediates the interaction with the RNA polymerase II complex.</text>
</comment>
<comment type="similarity">
    <text evidence="12">Belongs to the NELF-A family.</text>
</comment>
<comment type="caution">
    <text evidence="12">PubMed:12612062 has shown that it is not involved in Wolf-Hirschhorn syndrome.</text>
</comment>
<comment type="sequence caution" evidence="12">
    <conflict type="erroneous initiation">
        <sequence resource="EMBL-CDS" id="AAC72982"/>
    </conflict>
    <text>Truncated N-terminus.</text>
</comment>
<comment type="sequence caution" evidence="12">
    <conflict type="erroneous initiation">
        <sequence resource="EMBL-CDS" id="BAG54283"/>
    </conflict>
    <text>Extended N-terminus.</text>
</comment>
<comment type="sequence caution" evidence="12">
    <conflict type="erroneous initiation">
        <sequence resource="EMBL-CDS" id="EAW82546"/>
    </conflict>
    <text>Extended N-terminus.</text>
</comment>
<keyword id="KW-0002">3D-structure</keyword>
<keyword id="KW-0025">Alternative splicing</keyword>
<keyword id="KW-0903">Direct protein sequencing</keyword>
<keyword id="KW-0539">Nucleus</keyword>
<keyword id="KW-0597">Phosphoprotein</keyword>
<keyword id="KW-1267">Proteomics identification</keyword>
<keyword id="KW-1185">Reference proteome</keyword>
<keyword id="KW-0678">Repressor</keyword>
<keyword id="KW-0804">Transcription</keyword>
<keyword id="KW-0805">Transcription regulation</keyword>
<name>NELFA_HUMAN</name>
<reference key="1">
    <citation type="journal article" date="1999" name="Genomics">
        <title>Comparative analysis of a novel gene from the Wolf-Hirschhorn/Pitt-Rogers-Danks syndrome critical region.</title>
        <authorList>
            <person name="Wright T.J."/>
            <person name="Costa J.L."/>
            <person name="Naranjo C."/>
            <person name="Francis-West P."/>
            <person name="Altherr M.R."/>
        </authorList>
    </citation>
    <scope>NUCLEOTIDE SEQUENCE [MRNA] (ISOFORM 1)</scope>
    <scope>TISSUE SPECIFICITY</scope>
    <source>
        <tissue>Brain</tissue>
    </source>
</reference>
<reference key="2">
    <citation type="journal article" date="2001" name="Cancer Res.">
        <title>Molecular basis of T cell-mediated recognition of pancreatic cancer cells.</title>
        <authorList>
            <person name="Ito M."/>
            <person name="Shichijo S."/>
            <person name="Tsuda N."/>
            <person name="Ochi M."/>
            <person name="Harashima N."/>
            <person name="Saito N."/>
            <person name="Itoh K."/>
        </authorList>
    </citation>
    <scope>NUCLEOTIDE SEQUENCE [MRNA] (ISOFORM 1)</scope>
    <source>
        <tissue>Pancreatic cancer</tissue>
    </source>
</reference>
<reference key="3">
    <citation type="submission" date="1999-02" db="EMBL/GenBank/DDBJ databases">
        <authorList>
            <person name="Mei G."/>
            <person name="Yu W."/>
            <person name="Gibbs R.A."/>
        </authorList>
    </citation>
    <scope>NUCLEOTIDE SEQUENCE [LARGE SCALE MRNA] (ISOFORM 2)</scope>
    <source>
        <tissue>Brain</tissue>
    </source>
</reference>
<reference key="4">
    <citation type="journal article" date="2004" name="Nat. Genet.">
        <title>Complete sequencing and characterization of 21,243 full-length human cDNAs.</title>
        <authorList>
            <person name="Ota T."/>
            <person name="Suzuki Y."/>
            <person name="Nishikawa T."/>
            <person name="Otsuki T."/>
            <person name="Sugiyama T."/>
            <person name="Irie R."/>
            <person name="Wakamatsu A."/>
            <person name="Hayashi K."/>
            <person name="Sato H."/>
            <person name="Nagai K."/>
            <person name="Kimura K."/>
            <person name="Makita H."/>
            <person name="Sekine M."/>
            <person name="Obayashi M."/>
            <person name="Nishi T."/>
            <person name="Shibahara T."/>
            <person name="Tanaka T."/>
            <person name="Ishii S."/>
            <person name="Yamamoto J."/>
            <person name="Saito K."/>
            <person name="Kawai Y."/>
            <person name="Isono Y."/>
            <person name="Nakamura Y."/>
            <person name="Nagahari K."/>
            <person name="Murakami K."/>
            <person name="Yasuda T."/>
            <person name="Iwayanagi T."/>
            <person name="Wagatsuma M."/>
            <person name="Shiratori A."/>
            <person name="Sudo H."/>
            <person name="Hosoiri T."/>
            <person name="Kaku Y."/>
            <person name="Kodaira H."/>
            <person name="Kondo H."/>
            <person name="Sugawara M."/>
            <person name="Takahashi M."/>
            <person name="Kanda K."/>
            <person name="Yokoi T."/>
            <person name="Furuya T."/>
            <person name="Kikkawa E."/>
            <person name="Omura Y."/>
            <person name="Abe K."/>
            <person name="Kamihara K."/>
            <person name="Katsuta N."/>
            <person name="Sato K."/>
            <person name="Tanikawa M."/>
            <person name="Yamazaki M."/>
            <person name="Ninomiya K."/>
            <person name="Ishibashi T."/>
            <person name="Yamashita H."/>
            <person name="Murakawa K."/>
            <person name="Fujimori K."/>
            <person name="Tanai H."/>
            <person name="Kimata M."/>
            <person name="Watanabe M."/>
            <person name="Hiraoka S."/>
            <person name="Chiba Y."/>
            <person name="Ishida S."/>
            <person name="Ono Y."/>
            <person name="Takiguchi S."/>
            <person name="Watanabe S."/>
            <person name="Yosida M."/>
            <person name="Hotuta T."/>
            <person name="Kusano J."/>
            <person name="Kanehori K."/>
            <person name="Takahashi-Fujii A."/>
            <person name="Hara H."/>
            <person name="Tanase T.-O."/>
            <person name="Nomura Y."/>
            <person name="Togiya S."/>
            <person name="Komai F."/>
            <person name="Hara R."/>
            <person name="Takeuchi K."/>
            <person name="Arita M."/>
            <person name="Imose N."/>
            <person name="Musashino K."/>
            <person name="Yuuki H."/>
            <person name="Oshima A."/>
            <person name="Sasaki N."/>
            <person name="Aotsuka S."/>
            <person name="Yoshikawa Y."/>
            <person name="Matsunawa H."/>
            <person name="Ichihara T."/>
            <person name="Shiohata N."/>
            <person name="Sano S."/>
            <person name="Moriya S."/>
            <person name="Momiyama H."/>
            <person name="Satoh N."/>
            <person name="Takami S."/>
            <person name="Terashima Y."/>
            <person name="Suzuki O."/>
            <person name="Nakagawa S."/>
            <person name="Senoh A."/>
            <person name="Mizoguchi H."/>
            <person name="Goto Y."/>
            <person name="Shimizu F."/>
            <person name="Wakebe H."/>
            <person name="Hishigaki H."/>
            <person name="Watanabe T."/>
            <person name="Sugiyama A."/>
            <person name="Takemoto M."/>
            <person name="Kawakami B."/>
            <person name="Yamazaki M."/>
            <person name="Watanabe K."/>
            <person name="Kumagai A."/>
            <person name="Itakura S."/>
            <person name="Fukuzumi Y."/>
            <person name="Fujimori Y."/>
            <person name="Komiyama M."/>
            <person name="Tashiro H."/>
            <person name="Tanigami A."/>
            <person name="Fujiwara T."/>
            <person name="Ono T."/>
            <person name="Yamada K."/>
            <person name="Fujii Y."/>
            <person name="Ozaki K."/>
            <person name="Hirao M."/>
            <person name="Ohmori Y."/>
            <person name="Kawabata A."/>
            <person name="Hikiji T."/>
            <person name="Kobatake N."/>
            <person name="Inagaki H."/>
            <person name="Ikema Y."/>
            <person name="Okamoto S."/>
            <person name="Okitani R."/>
            <person name="Kawakami T."/>
            <person name="Noguchi S."/>
            <person name="Itoh T."/>
            <person name="Shigeta K."/>
            <person name="Senba T."/>
            <person name="Matsumura K."/>
            <person name="Nakajima Y."/>
            <person name="Mizuno T."/>
            <person name="Morinaga M."/>
            <person name="Sasaki M."/>
            <person name="Togashi T."/>
            <person name="Oyama M."/>
            <person name="Hata H."/>
            <person name="Watanabe M."/>
            <person name="Komatsu T."/>
            <person name="Mizushima-Sugano J."/>
            <person name="Satoh T."/>
            <person name="Shirai Y."/>
            <person name="Takahashi Y."/>
            <person name="Nakagawa K."/>
            <person name="Okumura K."/>
            <person name="Nagase T."/>
            <person name="Nomura N."/>
            <person name="Kikuchi H."/>
            <person name="Masuho Y."/>
            <person name="Yamashita R."/>
            <person name="Nakai K."/>
            <person name="Yada T."/>
            <person name="Nakamura Y."/>
            <person name="Ohara O."/>
            <person name="Isogai T."/>
            <person name="Sugano S."/>
        </authorList>
    </citation>
    <scope>NUCLEOTIDE SEQUENCE [LARGE SCALE MRNA] (ISOFORM 1)</scope>
    <source>
        <tissue>Testis</tissue>
    </source>
</reference>
<reference key="5">
    <citation type="journal article" date="2005" name="Nature">
        <title>Generation and annotation of the DNA sequences of human chromosomes 2 and 4.</title>
        <authorList>
            <person name="Hillier L.W."/>
            <person name="Graves T.A."/>
            <person name="Fulton R.S."/>
            <person name="Fulton L.A."/>
            <person name="Pepin K.H."/>
            <person name="Minx P."/>
            <person name="Wagner-McPherson C."/>
            <person name="Layman D."/>
            <person name="Wylie K."/>
            <person name="Sekhon M."/>
            <person name="Becker M.C."/>
            <person name="Fewell G.A."/>
            <person name="Delehaunty K.D."/>
            <person name="Miner T.L."/>
            <person name="Nash W.E."/>
            <person name="Kremitzki C."/>
            <person name="Oddy L."/>
            <person name="Du H."/>
            <person name="Sun H."/>
            <person name="Bradshaw-Cordum H."/>
            <person name="Ali J."/>
            <person name="Carter J."/>
            <person name="Cordes M."/>
            <person name="Harris A."/>
            <person name="Isak A."/>
            <person name="van Brunt A."/>
            <person name="Nguyen C."/>
            <person name="Du F."/>
            <person name="Courtney L."/>
            <person name="Kalicki J."/>
            <person name="Ozersky P."/>
            <person name="Abbott S."/>
            <person name="Armstrong J."/>
            <person name="Belter E.A."/>
            <person name="Caruso L."/>
            <person name="Cedroni M."/>
            <person name="Cotton M."/>
            <person name="Davidson T."/>
            <person name="Desai A."/>
            <person name="Elliott G."/>
            <person name="Erb T."/>
            <person name="Fronick C."/>
            <person name="Gaige T."/>
            <person name="Haakenson W."/>
            <person name="Haglund K."/>
            <person name="Holmes A."/>
            <person name="Harkins R."/>
            <person name="Kim K."/>
            <person name="Kruchowski S.S."/>
            <person name="Strong C.M."/>
            <person name="Grewal N."/>
            <person name="Goyea E."/>
            <person name="Hou S."/>
            <person name="Levy A."/>
            <person name="Martinka S."/>
            <person name="Mead K."/>
            <person name="McLellan M.D."/>
            <person name="Meyer R."/>
            <person name="Randall-Maher J."/>
            <person name="Tomlinson C."/>
            <person name="Dauphin-Kohlberg S."/>
            <person name="Kozlowicz-Reilly A."/>
            <person name="Shah N."/>
            <person name="Swearengen-Shahid S."/>
            <person name="Snider J."/>
            <person name="Strong J.T."/>
            <person name="Thompson J."/>
            <person name="Yoakum M."/>
            <person name="Leonard S."/>
            <person name="Pearman C."/>
            <person name="Trani L."/>
            <person name="Radionenko M."/>
            <person name="Waligorski J.E."/>
            <person name="Wang C."/>
            <person name="Rock S.M."/>
            <person name="Tin-Wollam A.-M."/>
            <person name="Maupin R."/>
            <person name="Latreille P."/>
            <person name="Wendl M.C."/>
            <person name="Yang S.-P."/>
            <person name="Pohl C."/>
            <person name="Wallis J.W."/>
            <person name="Spieth J."/>
            <person name="Bieri T.A."/>
            <person name="Berkowicz N."/>
            <person name="Nelson J.O."/>
            <person name="Osborne J."/>
            <person name="Ding L."/>
            <person name="Meyer R."/>
            <person name="Sabo A."/>
            <person name="Shotland Y."/>
            <person name="Sinha P."/>
            <person name="Wohldmann P.E."/>
            <person name="Cook L.L."/>
            <person name="Hickenbotham M.T."/>
            <person name="Eldred J."/>
            <person name="Williams D."/>
            <person name="Jones T.A."/>
            <person name="She X."/>
            <person name="Ciccarelli F.D."/>
            <person name="Izaurralde E."/>
            <person name="Taylor J."/>
            <person name="Schmutz J."/>
            <person name="Myers R.M."/>
            <person name="Cox D.R."/>
            <person name="Huang X."/>
            <person name="McPherson J.D."/>
            <person name="Mardis E.R."/>
            <person name="Clifton S.W."/>
            <person name="Warren W.C."/>
            <person name="Chinwalla A.T."/>
            <person name="Eddy S.R."/>
            <person name="Marra M.A."/>
            <person name="Ovcharenko I."/>
            <person name="Furey T.S."/>
            <person name="Miller W."/>
            <person name="Eichler E.E."/>
            <person name="Bork P."/>
            <person name="Suyama M."/>
            <person name="Torrents D."/>
            <person name="Waterston R.H."/>
            <person name="Wilson R.K."/>
        </authorList>
    </citation>
    <scope>NUCLEOTIDE SEQUENCE [LARGE SCALE GENOMIC DNA]</scope>
</reference>
<reference key="6">
    <citation type="submission" date="2005-09" db="EMBL/GenBank/DDBJ databases">
        <authorList>
            <person name="Mural R.J."/>
            <person name="Istrail S."/>
            <person name="Sutton G.G."/>
            <person name="Florea L."/>
            <person name="Halpern A.L."/>
            <person name="Mobarry C.M."/>
            <person name="Lippert R."/>
            <person name="Walenz B."/>
            <person name="Shatkay H."/>
            <person name="Dew I."/>
            <person name="Miller J.R."/>
            <person name="Flanigan M.J."/>
            <person name="Edwards N.J."/>
            <person name="Bolanos R."/>
            <person name="Fasulo D."/>
            <person name="Halldorsson B.V."/>
            <person name="Hannenhalli S."/>
            <person name="Turner R."/>
            <person name="Yooseph S."/>
            <person name="Lu F."/>
            <person name="Nusskern D.R."/>
            <person name="Shue B.C."/>
            <person name="Zheng X.H."/>
            <person name="Zhong F."/>
            <person name="Delcher A.L."/>
            <person name="Huson D.H."/>
            <person name="Kravitz S.A."/>
            <person name="Mouchard L."/>
            <person name="Reinert K."/>
            <person name="Remington K.A."/>
            <person name="Clark A.G."/>
            <person name="Waterman M.S."/>
            <person name="Eichler E.E."/>
            <person name="Adams M.D."/>
            <person name="Hunkapiller M.W."/>
            <person name="Myers E.W."/>
            <person name="Venter J.C."/>
        </authorList>
    </citation>
    <scope>NUCLEOTIDE SEQUENCE [LARGE SCALE GENOMIC DNA]</scope>
</reference>
<reference key="7">
    <citation type="journal article" date="2004" name="Genome Res.">
        <title>The status, quality, and expansion of the NIH full-length cDNA project: the Mammalian Gene Collection (MGC).</title>
        <authorList>
            <consortium name="The MGC Project Team"/>
        </authorList>
    </citation>
    <scope>NUCLEOTIDE SEQUENCE [LARGE SCALE MRNA] (ISOFORM 1)</scope>
    <source>
        <tissue>Placenta</tissue>
    </source>
</reference>
<reference key="8">
    <citation type="journal article" date="2001" name="Science">
        <title>Stimulation of RNA polymerase II elongation by hepatitis delta antigen.</title>
        <authorList>
            <person name="Yamaguchi Y."/>
            <person name="Filipovska J."/>
            <person name="Yano K."/>
            <person name="Furuya A."/>
            <person name="Inukai N."/>
            <person name="Narita T."/>
            <person name="Wada T."/>
            <person name="Sugimoto S."/>
            <person name="Konarska M.M."/>
            <person name="Handa H."/>
        </authorList>
    </citation>
    <scope>PROTEIN SEQUENCE OF 212-221; 309-321 AND 503-513</scope>
    <scope>IDENTIFICATION IN THE NELF COMPLEX</scope>
</reference>
<reference key="9">
    <citation type="journal article" date="1999" name="Cell">
        <title>NELF, a multisubunit complex containing RD, cooperates with DSIF to repress RNA polymerase II elongation.</title>
        <authorList>
            <person name="Yamaguchi Y."/>
            <person name="Takagi T."/>
            <person name="Wada T."/>
            <person name="Yano K."/>
            <person name="Furuya A."/>
            <person name="Sugimoto S."/>
            <person name="Hasegawa J."/>
            <person name="Handa H."/>
        </authorList>
    </citation>
    <scope>FUNCTION OF THE NELF COMPLEX</scope>
    <scope>INTERACTION WITH RNA POLYMERASE II COMPLEX</scope>
</reference>
<reference key="10">
    <citation type="journal article" date="2000" name="FEBS Lett.">
        <title>Modulation of WHSC2 expression in human endothelial cells.</title>
        <authorList>
            <person name="Mariotti M."/>
            <person name="Manganini M."/>
            <person name="Maier J.A.M."/>
        </authorList>
    </citation>
    <scope>SUBCELLULAR LOCATION</scope>
    <scope>TISSUE SPECIFICITY</scope>
</reference>
<reference key="11">
    <citation type="journal article" date="2003" name="Am. J. Hum. Genet.">
        <title>Mapping the Wolf-Hirschhorn syndrome phenotype outside the currently accepted WHS critical region and defining a new critical region, WHSCR-2.</title>
        <authorList>
            <person name="Zollino M."/>
            <person name="Lecce R."/>
            <person name="Fischetto R."/>
            <person name="Murdolo M."/>
            <person name="Faravelli F."/>
            <person name="Selicorni A."/>
            <person name="Butte C."/>
            <person name="Memo L."/>
            <person name="Capovilla G."/>
            <person name="Neri G."/>
        </authorList>
    </citation>
    <scope>FUNCTION</scope>
</reference>
<reference key="12">
    <citation type="journal article" date="2003" name="Mol. Cell. Biol.">
        <title>Human transcription elongation factor NELF: identification of novel subunits and reconstitution of the functionally active complex.</title>
        <authorList>
            <person name="Narita T."/>
            <person name="Yamaguchi Y."/>
            <person name="Yano K."/>
            <person name="Sugimoto S."/>
            <person name="Chanarat S."/>
            <person name="Wada T."/>
            <person name="Kim D.-K."/>
            <person name="Hasegawa J."/>
            <person name="Omori M."/>
            <person name="Inukai N."/>
            <person name="Endoh M."/>
            <person name="Yamada T."/>
            <person name="Handa H."/>
        </authorList>
    </citation>
    <scope>FUNCTION</scope>
    <scope>TISSUE SPECIFICITY</scope>
    <scope>DOMAIN</scope>
</reference>
<reference key="13">
    <citation type="journal article" date="2006" name="Nat. Biotechnol.">
        <title>A probability-based approach for high-throughput protein phosphorylation analysis and site localization.</title>
        <authorList>
            <person name="Beausoleil S.A."/>
            <person name="Villen J."/>
            <person name="Gerber S.A."/>
            <person name="Rush J."/>
            <person name="Gygi S.P."/>
        </authorList>
    </citation>
    <scope>PHOSPHORYLATION [LARGE SCALE ANALYSIS] AT THR-157</scope>
    <scope>IDENTIFICATION BY MASS SPECTROMETRY [LARGE SCALE ANALYSIS]</scope>
    <source>
        <tissue>Cervix carcinoma</tissue>
    </source>
</reference>
<reference key="14">
    <citation type="journal article" date="2008" name="Proc. Natl. Acad. Sci. U.S.A.">
        <title>A quantitative atlas of mitotic phosphorylation.</title>
        <authorList>
            <person name="Dephoure N."/>
            <person name="Zhou C."/>
            <person name="Villen J."/>
            <person name="Beausoleil S.A."/>
            <person name="Bakalarski C.E."/>
            <person name="Elledge S.J."/>
            <person name="Gygi S.P."/>
        </authorList>
    </citation>
    <scope>PHOSPHORYLATION [LARGE SCALE ANALYSIS] AT SER-363</scope>
    <scope>IDENTIFICATION BY MASS SPECTROMETRY [LARGE SCALE ANALYSIS]</scope>
    <source>
        <tissue>Cervix carcinoma</tissue>
    </source>
</reference>
<reference key="15">
    <citation type="journal article" date="2009" name="Anal. Chem.">
        <title>Lys-N and trypsin cover complementary parts of the phosphoproteome in a refined SCX-based approach.</title>
        <authorList>
            <person name="Gauci S."/>
            <person name="Helbig A.O."/>
            <person name="Slijper M."/>
            <person name="Krijgsveld J."/>
            <person name="Heck A.J."/>
            <person name="Mohammed S."/>
        </authorList>
    </citation>
    <scope>IDENTIFICATION BY MASS SPECTROMETRY [LARGE SCALE ANALYSIS]</scope>
</reference>
<reference key="16">
    <citation type="journal article" date="2009" name="Sci. Signal.">
        <title>Quantitative phosphoproteomic analysis of T cell receptor signaling reveals system-wide modulation of protein-protein interactions.</title>
        <authorList>
            <person name="Mayya V."/>
            <person name="Lundgren D.H."/>
            <person name="Hwang S.-I."/>
            <person name="Rezaul K."/>
            <person name="Wu L."/>
            <person name="Eng J.K."/>
            <person name="Rodionov V."/>
            <person name="Han D.K."/>
        </authorList>
    </citation>
    <scope>PHOSPHORYLATION [LARGE SCALE ANALYSIS] AT THR-157</scope>
    <scope>IDENTIFICATION BY MASS SPECTROMETRY [LARGE SCALE ANALYSIS]</scope>
    <source>
        <tissue>Leukemic T-cell</tissue>
    </source>
</reference>
<reference key="17">
    <citation type="journal article" date="2010" name="Sci. Signal.">
        <title>Quantitative phosphoproteomics reveals widespread full phosphorylation site occupancy during mitosis.</title>
        <authorList>
            <person name="Olsen J.V."/>
            <person name="Vermeulen M."/>
            <person name="Santamaria A."/>
            <person name="Kumar C."/>
            <person name="Miller M.L."/>
            <person name="Jensen L.J."/>
            <person name="Gnad F."/>
            <person name="Cox J."/>
            <person name="Jensen T.S."/>
            <person name="Nigg E.A."/>
            <person name="Brunak S."/>
            <person name="Mann M."/>
        </authorList>
    </citation>
    <scope>PHOSPHORYLATION [LARGE SCALE ANALYSIS] AT THR-157; THR-277 AND SER-363</scope>
    <scope>IDENTIFICATION BY MASS SPECTROMETRY [LARGE SCALE ANALYSIS]</scope>
    <source>
        <tissue>Cervix carcinoma</tissue>
    </source>
</reference>
<reference key="18">
    <citation type="journal article" date="2011" name="BMC Syst. Biol.">
        <title>Initial characterization of the human central proteome.</title>
        <authorList>
            <person name="Burkard T.R."/>
            <person name="Planyavsky M."/>
            <person name="Kaupe I."/>
            <person name="Breitwieser F.P."/>
            <person name="Buerckstuemmer T."/>
            <person name="Bennett K.L."/>
            <person name="Superti-Furga G."/>
            <person name="Colinge J."/>
        </authorList>
    </citation>
    <scope>IDENTIFICATION BY MASS SPECTROMETRY [LARGE SCALE ANALYSIS]</scope>
</reference>
<reference key="19">
    <citation type="journal article" date="2013" name="J. Biol. Chem.">
        <title>Negative elongation factor (NELF) coordinates RNA polymerase II pausing, premature termination, and chromatin remodeling to regulate HIV transcription.</title>
        <authorList>
            <person name="Natarajan M."/>
            <person name="Schiralli Lester G.M."/>
            <person name="Lee C."/>
            <person name="Missra A."/>
            <person name="Wasserman G.A."/>
            <person name="Steffen M."/>
            <person name="Gilmour D.S."/>
            <person name="Henderson A.J."/>
        </authorList>
    </citation>
    <scope>FUNCTION OF THE NELF COMPLEX IN HIV-1 LATENCY (MICROBIAL INFECTION)</scope>
</reference>
<reference key="20">
    <citation type="journal article" date="2013" name="J. Proteome Res.">
        <title>Toward a comprehensive characterization of a human cancer cell phosphoproteome.</title>
        <authorList>
            <person name="Zhou H."/>
            <person name="Di Palma S."/>
            <person name="Preisinger C."/>
            <person name="Peng M."/>
            <person name="Polat A.N."/>
            <person name="Heck A.J."/>
            <person name="Mohammed S."/>
        </authorList>
    </citation>
    <scope>PHOSPHORYLATION [LARGE SCALE ANALYSIS] AT THR-157; SER-225; SER-233; THR-277 AND SER-363</scope>
    <scope>IDENTIFICATION BY MASS SPECTROMETRY [LARGE SCALE ANALYSIS]</scope>
    <source>
        <tissue>Cervix carcinoma</tissue>
        <tissue>Erythroleukemia</tissue>
    </source>
</reference>
<reference key="21">
    <citation type="journal article" date="2014" name="J. Proteomics">
        <title>An enzyme assisted RP-RPLC approach for in-depth analysis of human liver phosphoproteome.</title>
        <authorList>
            <person name="Bian Y."/>
            <person name="Song C."/>
            <person name="Cheng K."/>
            <person name="Dong M."/>
            <person name="Wang F."/>
            <person name="Huang J."/>
            <person name="Sun D."/>
            <person name="Wang L."/>
            <person name="Ye M."/>
            <person name="Zou H."/>
        </authorList>
    </citation>
    <scope>PHOSPHORYLATION [LARGE SCALE ANALYSIS] AT SER-363</scope>
    <scope>IDENTIFICATION BY MASS SPECTROMETRY [LARGE SCALE ANALYSIS]</scope>
    <source>
        <tissue>Liver</tissue>
    </source>
</reference>
<reference key="22">
    <citation type="journal article" date="2016" name="Elife">
        <title>Architecture and RNA binding of the human negative elongation factor.</title>
        <authorList>
            <person name="Vos S.M."/>
            <person name="Pollmann D."/>
            <person name="Caizzi L."/>
            <person name="Hofmann K.B."/>
            <person name="Rombaut P."/>
            <person name="Zimniak T."/>
            <person name="Herzog F."/>
            <person name="Cramer P."/>
        </authorList>
    </citation>
    <scope>X-RAY CRYSTALLOGRAPHY (2.75 ANGSTROMS) OF 6-182 IN COMPLEX WITH NELFCD</scope>
    <scope>RECONSTITUTION OF THE NELF COMPLEX</scope>
</reference>
<gene>
    <name type="primary">NELFA</name>
    <name type="synonym">WHSC2</name>
    <name type="ORF">P/OKcl.15</name>
</gene>
<feature type="chain" id="PRO_0000219126" description="Negative elongation factor A">
    <location>
        <begin position="1"/>
        <end position="528"/>
    </location>
</feature>
<feature type="domain" description="HDAg" evidence="1">
    <location>
        <begin position="89"/>
        <end position="248"/>
    </location>
</feature>
<feature type="region of interest" description="NELF-C/D-binding" evidence="1">
    <location>
        <begin position="125"/>
        <end position="188"/>
    </location>
</feature>
<feature type="region of interest" description="RNAPII-binding" evidence="1">
    <location>
        <begin position="189"/>
        <end position="248"/>
    </location>
</feature>
<feature type="region of interest" description="Disordered" evidence="2">
    <location>
        <begin position="215"/>
        <end position="245"/>
    </location>
</feature>
<feature type="region of interest" description="Disordered" evidence="2">
    <location>
        <begin position="320"/>
        <end position="409"/>
    </location>
</feature>
<feature type="compositionally biased region" description="Polar residues" evidence="2">
    <location>
        <begin position="227"/>
        <end position="238"/>
    </location>
</feature>
<feature type="compositionally biased region" description="Low complexity" evidence="2">
    <location>
        <begin position="320"/>
        <end position="341"/>
    </location>
</feature>
<feature type="modified residue" description="Phosphothreonine" evidence="13 15 16 17">
    <location>
        <position position="157"/>
    </location>
</feature>
<feature type="modified residue" description="Phosphoserine" evidence="17">
    <location>
        <position position="225"/>
    </location>
</feature>
<feature type="modified residue" description="Phosphoserine" evidence="17">
    <location>
        <position position="233"/>
    </location>
</feature>
<feature type="modified residue" description="Phosphothreonine" evidence="16 17">
    <location>
        <position position="277"/>
    </location>
</feature>
<feature type="modified residue" description="Phosphoserine" evidence="14 16 17 18">
    <location>
        <position position="363"/>
    </location>
</feature>
<feature type="splice variant" id="VSP_035589" description="In isoform 2." evidence="11">
    <location>
        <begin position="1"/>
        <end position="263"/>
    </location>
</feature>
<feature type="sequence variant" id="VAR_059459" description="In dbSNP:rs2234569.">
    <original>S</original>
    <variation>A</variation>
    <location>
        <position position="335"/>
    </location>
</feature>
<feature type="sequence conflict" description="In Ref. 2; BAB18651." evidence="12" ref="2">
    <original>V</original>
    <variation>I</variation>
    <location>
        <position position="37"/>
    </location>
</feature>
<feature type="sequence conflict" description="In Ref. 2; BAB18651." evidence="12" ref="2">
    <original>N</original>
    <variation>NIRLCFHGLSSASLLTAAVIDN</variation>
    <location>
        <position position="40"/>
    </location>
</feature>
<feature type="helix" evidence="21">
    <location>
        <begin position="10"/>
        <end position="17"/>
    </location>
</feature>
<feature type="turn" evidence="21">
    <location>
        <begin position="29"/>
        <end position="31"/>
    </location>
</feature>
<feature type="helix" evidence="21">
    <location>
        <begin position="35"/>
        <end position="44"/>
    </location>
</feature>
<feature type="helix" evidence="21">
    <location>
        <begin position="45"/>
        <end position="47"/>
    </location>
</feature>
<feature type="helix" evidence="21">
    <location>
        <begin position="50"/>
        <end position="62"/>
    </location>
</feature>
<feature type="helix" evidence="21">
    <location>
        <begin position="65"/>
        <end position="70"/>
    </location>
</feature>
<feature type="helix" evidence="21">
    <location>
        <begin position="72"/>
        <end position="82"/>
    </location>
</feature>
<feature type="helix" evidence="21">
    <location>
        <begin position="88"/>
        <end position="96"/>
    </location>
</feature>
<feature type="turn" evidence="21">
    <location>
        <begin position="100"/>
        <end position="102"/>
    </location>
</feature>
<feature type="turn" evidence="20">
    <location>
        <begin position="110"/>
        <end position="113"/>
    </location>
</feature>
<feature type="helix" evidence="21">
    <location>
        <begin position="115"/>
        <end position="130"/>
    </location>
</feature>
<feature type="turn" evidence="21">
    <location>
        <begin position="131"/>
        <end position="134"/>
    </location>
</feature>
<feature type="helix" evidence="21">
    <location>
        <begin position="141"/>
        <end position="143"/>
    </location>
</feature>
<feature type="helix" evidence="21">
    <location>
        <begin position="146"/>
        <end position="151"/>
    </location>
</feature>
<feature type="strand" evidence="19">
    <location>
        <begin position="163"/>
        <end position="167"/>
    </location>
</feature>
<feature type="helix" evidence="21">
    <location>
        <begin position="170"/>
        <end position="187"/>
    </location>
</feature>
<feature type="helix" evidence="21">
    <location>
        <begin position="259"/>
        <end position="261"/>
    </location>
</feature>
<accession>Q9H3P2</accession>
<accession>A2A2T1</accession>
<accession>O95392</accession>
<evidence type="ECO:0000255" key="1">
    <source>
        <dbReference type="PROSITE-ProRule" id="PRU01183"/>
    </source>
</evidence>
<evidence type="ECO:0000256" key="2">
    <source>
        <dbReference type="SAM" id="MobiDB-lite"/>
    </source>
</evidence>
<evidence type="ECO:0000269" key="3">
    <source>
    </source>
</evidence>
<evidence type="ECO:0000269" key="4">
    <source>
    </source>
</evidence>
<evidence type="ECO:0000269" key="5">
    <source>
    </source>
</evidence>
<evidence type="ECO:0000269" key="6">
    <source>
    </source>
</evidence>
<evidence type="ECO:0000269" key="7">
    <source>
    </source>
</evidence>
<evidence type="ECO:0000269" key="8">
    <source>
    </source>
</evidence>
<evidence type="ECO:0000269" key="9">
    <source>
    </source>
</evidence>
<evidence type="ECO:0000269" key="10">
    <source>
    </source>
</evidence>
<evidence type="ECO:0000303" key="11">
    <source ref="3"/>
</evidence>
<evidence type="ECO:0000305" key="12"/>
<evidence type="ECO:0007744" key="13">
    <source>
    </source>
</evidence>
<evidence type="ECO:0007744" key="14">
    <source>
    </source>
</evidence>
<evidence type="ECO:0007744" key="15">
    <source>
    </source>
</evidence>
<evidence type="ECO:0007744" key="16">
    <source>
    </source>
</evidence>
<evidence type="ECO:0007744" key="17">
    <source>
    </source>
</evidence>
<evidence type="ECO:0007744" key="18">
    <source>
    </source>
</evidence>
<evidence type="ECO:0007829" key="19">
    <source>
        <dbReference type="PDB" id="5L3X"/>
    </source>
</evidence>
<evidence type="ECO:0007829" key="20">
    <source>
        <dbReference type="PDB" id="8UHA"/>
    </source>
</evidence>
<evidence type="ECO:0007829" key="21">
    <source>
        <dbReference type="PDB" id="8UHG"/>
    </source>
</evidence>
<sequence length="528" mass="57277">MASMRESDTGLWLHNKLGATDELWAPPSIASLLTAAVIDNIRLCFHGLSSAVKLKLLLGTLHLPRRTVDEMKGALMEIIQLASLDSDPWVLMVADILKSFPDTGSLNLELEEQNPNVQDILGELREKVGECEASAMLPLECQYLNKNALTTLAGPLTPPVKHFQLKRKPKSATLRAELLQKSTETAQQLKRSAGVPFHAKGRGLLRKMDTTTPLKGIPKQAPFRSPTAPSVFSPTGNRTPIPPSRTLLRKERGVKLLDISELDMVGAGREAKRRRKTLDAEVVEKPAKEETVVENATPDYAAGLVSTQKLGSLNNEPALPSTSYLPSTPSVVPASSYIPSSETPPAPSSREASRPPEEPSAPSPTLPAQFKQRAPMYNSGLSPATPTPAAPTSPLTPTTPPAVAPTTQTPPVAMVAPQTQAPAQQQPKKNLSLTREQMFAAQEMFKTANKVTRPEKALILGFMAGSRENPCQEQGDVIQIKLSEHTEDLPKADGQGSTTMLVDTVFEMNYATGQWTRFKKYKPMTNVS</sequence>
<protein>
    <recommendedName>
        <fullName>Negative elongation factor A</fullName>
        <shortName>NELF-A</shortName>
    </recommendedName>
    <alternativeName>
        <fullName>Wolf-Hirschhorn syndrome candidate 2 protein</fullName>
    </alternativeName>
</protein>
<dbReference type="EMBL" id="AF101434">
    <property type="protein sequence ID" value="AAC72982.1"/>
    <property type="status" value="ALT_INIT"/>
    <property type="molecule type" value="mRNA"/>
</dbReference>
<dbReference type="EMBL" id="AB044549">
    <property type="protein sequence ID" value="BAB18651.1"/>
    <property type="molecule type" value="mRNA"/>
</dbReference>
<dbReference type="EMBL" id="AF131751">
    <property type="protein sequence ID" value="AAD20034.1"/>
    <property type="molecule type" value="mRNA"/>
</dbReference>
<dbReference type="EMBL" id="AK126056">
    <property type="protein sequence ID" value="BAG54283.1"/>
    <property type="status" value="ALT_INIT"/>
    <property type="molecule type" value="mRNA"/>
</dbReference>
<dbReference type="EMBL" id="AL132868">
    <property type="status" value="NOT_ANNOTATED_CDS"/>
    <property type="molecule type" value="Genomic_DNA"/>
</dbReference>
<dbReference type="EMBL" id="CH471131">
    <property type="protein sequence ID" value="EAW82546.1"/>
    <property type="status" value="ALT_INIT"/>
    <property type="molecule type" value="Genomic_DNA"/>
</dbReference>
<dbReference type="EMBL" id="BC002764">
    <property type="protein sequence ID" value="AAH02764.2"/>
    <property type="molecule type" value="mRNA"/>
</dbReference>
<dbReference type="CCDS" id="CCDS3358.3">
    <molecule id="Q9H3P2-1"/>
</dbReference>
<dbReference type="RefSeq" id="NP_005654.3">
    <molecule id="Q9H3P2-1"/>
    <property type="nucleotide sequence ID" value="NM_005663.4"/>
</dbReference>
<dbReference type="PDB" id="5L3X">
    <property type="method" value="X-ray"/>
    <property type="resolution" value="2.75 A"/>
    <property type="chains" value="A=6-182"/>
</dbReference>
<dbReference type="PDB" id="6GML">
    <property type="method" value="EM"/>
    <property type="resolution" value="3.20 A"/>
    <property type="chains" value="U=1-528"/>
</dbReference>
<dbReference type="PDB" id="7PKS">
    <property type="method" value="EM"/>
    <property type="resolution" value="3.60 A"/>
    <property type="chains" value="U=1-528"/>
</dbReference>
<dbReference type="PDB" id="7YCX">
    <property type="method" value="EM"/>
    <property type="resolution" value="4.18 A"/>
    <property type="chains" value="e=1-528"/>
</dbReference>
<dbReference type="PDB" id="8RBX">
    <property type="method" value="EM"/>
    <property type="resolution" value="4.10 A"/>
    <property type="chains" value="u=1-528"/>
</dbReference>
<dbReference type="PDB" id="8UHA">
    <property type="method" value="EM"/>
    <property type="resolution" value="3.50 A"/>
    <property type="chains" value="U=1-528"/>
</dbReference>
<dbReference type="PDB" id="8UHD">
    <property type="method" value="EM"/>
    <property type="resolution" value="2.80 A"/>
    <property type="chains" value="U=1-528"/>
</dbReference>
<dbReference type="PDB" id="8UHG">
    <property type="method" value="EM"/>
    <property type="resolution" value="2.70 A"/>
    <property type="chains" value="U=1-528"/>
</dbReference>
<dbReference type="PDB" id="8UI0">
    <property type="method" value="EM"/>
    <property type="resolution" value="2.70 A"/>
    <property type="chains" value="U=1-528"/>
</dbReference>
<dbReference type="PDB" id="8UIS">
    <property type="method" value="EM"/>
    <property type="resolution" value="3.23 A"/>
    <property type="chains" value="U=1-528"/>
</dbReference>
<dbReference type="PDB" id="8W8E">
    <property type="method" value="EM"/>
    <property type="resolution" value="3.90 A"/>
    <property type="chains" value="U=1-528"/>
</dbReference>
<dbReference type="PDB" id="9J0N">
    <property type="method" value="EM"/>
    <property type="resolution" value="3.40 A"/>
    <property type="chains" value="U=1-528"/>
</dbReference>
<dbReference type="PDB" id="9J0O">
    <property type="method" value="EM"/>
    <property type="resolution" value="3.30 A"/>
    <property type="chains" value="U=1-528"/>
</dbReference>
<dbReference type="PDB" id="9J0P">
    <property type="method" value="EM"/>
    <property type="resolution" value="3.30 A"/>
    <property type="chains" value="U=1-528"/>
</dbReference>
<dbReference type="PDBsum" id="5L3X"/>
<dbReference type="PDBsum" id="6GML"/>
<dbReference type="PDBsum" id="7PKS"/>
<dbReference type="PDBsum" id="7YCX"/>
<dbReference type="PDBsum" id="8RBX"/>
<dbReference type="PDBsum" id="8UHA"/>
<dbReference type="PDBsum" id="8UHD"/>
<dbReference type="PDBsum" id="8UHG"/>
<dbReference type="PDBsum" id="8UI0"/>
<dbReference type="PDBsum" id="8UIS"/>
<dbReference type="PDBsum" id="8W8E"/>
<dbReference type="PDBsum" id="9J0N"/>
<dbReference type="PDBsum" id="9J0O"/>
<dbReference type="PDBsum" id="9J0P"/>
<dbReference type="EMDB" id="EMD-0038"/>
<dbReference type="EMDB" id="EMD-13479"/>
<dbReference type="EMDB" id="EMD-19038"/>
<dbReference type="EMDB" id="EMD-33741"/>
<dbReference type="EMDB" id="EMD-37352"/>
<dbReference type="EMDB" id="EMD-42267"/>
<dbReference type="EMDB" id="EMD-42270"/>
<dbReference type="EMDB" id="EMD-42280"/>
<dbReference type="EMDB" id="EMD-42285"/>
<dbReference type="EMDB" id="EMD-42303"/>
<dbReference type="EMDB" id="EMD-42304"/>
<dbReference type="EMDB" id="EMD-61058"/>
<dbReference type="EMDB" id="EMD-61059"/>
<dbReference type="EMDB" id="EMD-61060"/>
<dbReference type="SMR" id="Q9H3P2"/>
<dbReference type="BioGRID" id="113307">
    <property type="interactions" value="124"/>
</dbReference>
<dbReference type="ComplexPortal" id="CPX-6267">
    <property type="entry name" value="NELF negative elongation factor complex"/>
</dbReference>
<dbReference type="CORUM" id="Q9H3P2"/>
<dbReference type="DIP" id="DIP-48478N"/>
<dbReference type="FunCoup" id="Q9H3P2">
    <property type="interactions" value="4468"/>
</dbReference>
<dbReference type="IntAct" id="Q9H3P2">
    <property type="interactions" value="74"/>
</dbReference>
<dbReference type="MINT" id="Q9H3P2"/>
<dbReference type="STRING" id="9606.ENSP00000445757"/>
<dbReference type="GlyGen" id="Q9H3P2">
    <property type="glycosylation" value="3 sites, 1 O-linked glycan (1 site)"/>
</dbReference>
<dbReference type="iPTMnet" id="Q9H3P2"/>
<dbReference type="MetOSite" id="Q9H3P2"/>
<dbReference type="PhosphoSitePlus" id="Q9H3P2"/>
<dbReference type="BioMuta" id="NELFA"/>
<dbReference type="DMDM" id="212276499"/>
<dbReference type="jPOST" id="Q9H3P2"/>
<dbReference type="MassIVE" id="Q9H3P2"/>
<dbReference type="PaxDb" id="9606-ENSP00000372335"/>
<dbReference type="PeptideAtlas" id="Q9H3P2"/>
<dbReference type="ProteomicsDB" id="80736">
    <molecule id="Q9H3P2-1"/>
</dbReference>
<dbReference type="ProteomicsDB" id="80737">
    <molecule id="Q9H3P2-7"/>
</dbReference>
<dbReference type="Pumba" id="Q9H3P2"/>
<dbReference type="Antibodypedia" id="4097">
    <property type="antibodies" value="201 antibodies from 26 providers"/>
</dbReference>
<dbReference type="DNASU" id="7469"/>
<dbReference type="Ensembl" id="ENST00000382882.9">
    <molecule id="Q9H3P2-1"/>
    <property type="protein sequence ID" value="ENSP00000372335.4"/>
    <property type="gene ID" value="ENSG00000185049.16"/>
</dbReference>
<dbReference type="GeneID" id="7469"/>
<dbReference type="KEGG" id="hsa:7469"/>
<dbReference type="MANE-Select" id="ENST00000382882.9">
    <property type="protein sequence ID" value="ENSP00000372335.4"/>
    <property type="RefSeq nucleotide sequence ID" value="NM_005663.5"/>
    <property type="RefSeq protein sequence ID" value="NP_005654.4"/>
</dbReference>
<dbReference type="UCSC" id="uc003gem.4">
    <molecule id="Q9H3P2-1"/>
    <property type="organism name" value="human"/>
</dbReference>
<dbReference type="AGR" id="HGNC:12768"/>
<dbReference type="CTD" id="7469"/>
<dbReference type="DisGeNET" id="7469"/>
<dbReference type="GeneCards" id="NELFA"/>
<dbReference type="HGNC" id="HGNC:12768">
    <property type="gene designation" value="NELFA"/>
</dbReference>
<dbReference type="HPA" id="ENSG00000185049">
    <property type="expression patterns" value="Low tissue specificity"/>
</dbReference>
<dbReference type="MalaCards" id="NELFA"/>
<dbReference type="MIM" id="606026">
    <property type="type" value="gene"/>
</dbReference>
<dbReference type="neXtProt" id="NX_Q9H3P2"/>
<dbReference type="OpenTargets" id="ENSG00000185049"/>
<dbReference type="Orphanet" id="280">
    <property type="disease" value="Wolf-Hirschhorn syndrome"/>
</dbReference>
<dbReference type="PharmGKB" id="PA37371"/>
<dbReference type="VEuPathDB" id="HostDB:ENSG00000185049"/>
<dbReference type="eggNOG" id="ENOG502QTCD">
    <property type="taxonomic scope" value="Eukaryota"/>
</dbReference>
<dbReference type="GeneTree" id="ENSGT00390000005342"/>
<dbReference type="HOGENOM" id="CLU_039060_1_0_1"/>
<dbReference type="InParanoid" id="Q9H3P2"/>
<dbReference type="OrthoDB" id="2135488at2759"/>
<dbReference type="PAN-GO" id="Q9H3P2">
    <property type="GO annotations" value="2 GO annotations based on evolutionary models"/>
</dbReference>
<dbReference type="PhylomeDB" id="Q9H3P2"/>
<dbReference type="TreeFam" id="TF324956"/>
<dbReference type="PathwayCommons" id="Q9H3P2"/>
<dbReference type="Reactome" id="R-HSA-112382">
    <property type="pathway name" value="Formation of RNA Pol II elongation complex"/>
</dbReference>
<dbReference type="Reactome" id="R-HSA-113418">
    <property type="pathway name" value="Formation of the Early Elongation Complex"/>
</dbReference>
<dbReference type="Reactome" id="R-HSA-167152">
    <property type="pathway name" value="Formation of HIV elongation complex in the absence of HIV Tat"/>
</dbReference>
<dbReference type="Reactome" id="R-HSA-167158">
    <property type="pathway name" value="Formation of the HIV-1 Early Elongation Complex"/>
</dbReference>
<dbReference type="Reactome" id="R-HSA-167200">
    <property type="pathway name" value="Formation of HIV-1 elongation complex containing HIV-1 Tat"/>
</dbReference>
<dbReference type="Reactome" id="R-HSA-167238">
    <property type="pathway name" value="Pausing and recovery of Tat-mediated HIV elongation"/>
</dbReference>
<dbReference type="Reactome" id="R-HSA-167242">
    <property type="pathway name" value="Abortive elongation of HIV-1 transcript in the absence of Tat"/>
</dbReference>
<dbReference type="Reactome" id="R-HSA-167243">
    <property type="pathway name" value="Tat-mediated HIV elongation arrest and recovery"/>
</dbReference>
<dbReference type="Reactome" id="R-HSA-167246">
    <property type="pathway name" value="Tat-mediated elongation of the HIV-1 transcript"/>
</dbReference>
<dbReference type="Reactome" id="R-HSA-167287">
    <property type="pathway name" value="HIV elongation arrest and recovery"/>
</dbReference>
<dbReference type="Reactome" id="R-HSA-167290">
    <property type="pathway name" value="Pausing and recovery of HIV elongation"/>
</dbReference>
<dbReference type="Reactome" id="R-HSA-674695">
    <property type="pathway name" value="RNA Polymerase II Pre-transcription Events"/>
</dbReference>
<dbReference type="Reactome" id="R-HSA-6796648">
    <property type="pathway name" value="TP53 Regulates Transcription of DNA Repair Genes"/>
</dbReference>
<dbReference type="Reactome" id="R-HSA-75955">
    <property type="pathway name" value="RNA Polymerase II Transcription Elongation"/>
</dbReference>
<dbReference type="SignaLink" id="Q9H3P2"/>
<dbReference type="SIGNOR" id="Q9H3P2"/>
<dbReference type="BioGRID-ORCS" id="7469">
    <property type="hits" value="631 hits in 1174 CRISPR screens"/>
</dbReference>
<dbReference type="CD-CODE" id="81D2A7B6">
    <property type="entry name" value="Nuclear stress body"/>
</dbReference>
<dbReference type="ChiTaRS" id="NELFA">
    <property type="organism name" value="human"/>
</dbReference>
<dbReference type="GeneWiki" id="WHSC2"/>
<dbReference type="GenomeRNAi" id="7469"/>
<dbReference type="Pharos" id="Q9H3P2">
    <property type="development level" value="Tbio"/>
</dbReference>
<dbReference type="PRO" id="PR:Q9H3P2"/>
<dbReference type="Proteomes" id="UP000005640">
    <property type="component" value="Chromosome 4"/>
</dbReference>
<dbReference type="RNAct" id="Q9H3P2">
    <property type="molecule type" value="protein"/>
</dbReference>
<dbReference type="Bgee" id="ENSG00000185049">
    <property type="expression patterns" value="Expressed in oocyte and 191 other cell types or tissues"/>
</dbReference>
<dbReference type="ExpressionAtlas" id="Q9H3P2">
    <property type="expression patterns" value="baseline and differential"/>
</dbReference>
<dbReference type="GO" id="GO:0005829">
    <property type="term" value="C:cytosol"/>
    <property type="evidence" value="ECO:0000314"/>
    <property type="project" value="HPA"/>
</dbReference>
<dbReference type="GO" id="GO:0032021">
    <property type="term" value="C:NELF complex"/>
    <property type="evidence" value="ECO:0000314"/>
    <property type="project" value="UniProtKB"/>
</dbReference>
<dbReference type="GO" id="GO:0016604">
    <property type="term" value="C:nuclear body"/>
    <property type="evidence" value="ECO:0000314"/>
    <property type="project" value="HPA"/>
</dbReference>
<dbReference type="GO" id="GO:0005654">
    <property type="term" value="C:nucleoplasm"/>
    <property type="evidence" value="ECO:0000314"/>
    <property type="project" value="HPA"/>
</dbReference>
<dbReference type="GO" id="GO:0005634">
    <property type="term" value="C:nucleus"/>
    <property type="evidence" value="ECO:0000314"/>
    <property type="project" value="ComplexPortal"/>
</dbReference>
<dbReference type="GO" id="GO:0003682">
    <property type="term" value="F:chromatin binding"/>
    <property type="evidence" value="ECO:0007669"/>
    <property type="project" value="Ensembl"/>
</dbReference>
<dbReference type="GO" id="GO:0060090">
    <property type="term" value="F:molecular adaptor activity"/>
    <property type="evidence" value="ECO:0000314"/>
    <property type="project" value="DisProt"/>
</dbReference>
<dbReference type="GO" id="GO:0034244">
    <property type="term" value="P:negative regulation of transcription elongation by RNA polymerase II"/>
    <property type="evidence" value="ECO:0000314"/>
    <property type="project" value="ComplexPortal"/>
</dbReference>
<dbReference type="GO" id="GO:0045944">
    <property type="term" value="P:positive regulation of transcription by RNA polymerase II"/>
    <property type="evidence" value="ECO:0007669"/>
    <property type="project" value="Ensembl"/>
</dbReference>
<dbReference type="DisProt" id="DP02712"/>
<dbReference type="InterPro" id="IPR037517">
    <property type="entry name" value="HDAG_dom"/>
</dbReference>
<dbReference type="InterPro" id="IPR052828">
    <property type="entry name" value="NELF-A_domain"/>
</dbReference>
<dbReference type="InterPro" id="IPR056557">
    <property type="entry name" value="NELF-A_N"/>
</dbReference>
<dbReference type="PANTHER" id="PTHR13328:SF4">
    <property type="entry name" value="NEGATIVE ELONGATION FACTOR A"/>
    <property type="match status" value="1"/>
</dbReference>
<dbReference type="PANTHER" id="PTHR13328">
    <property type="entry name" value="NEGATIVE ELONGATION FACTOR A NELF-A"/>
    <property type="match status" value="1"/>
</dbReference>
<dbReference type="Pfam" id="PF23553">
    <property type="entry name" value="NELF-A_N"/>
    <property type="match status" value="1"/>
</dbReference>
<dbReference type="PROSITE" id="PS51838">
    <property type="entry name" value="HDAG"/>
    <property type="match status" value="1"/>
</dbReference>
<proteinExistence type="evidence at protein level"/>